<reference key="1">
    <citation type="journal article" date="2011" name="J. Bacteriol.">
        <title>Complete genome sequence of the plant growth-promoting endophyte Burkholderia phytofirmans strain PsJN.</title>
        <authorList>
            <person name="Weilharter A."/>
            <person name="Mitter B."/>
            <person name="Shin M.V."/>
            <person name="Chain P.S."/>
            <person name="Nowak J."/>
            <person name="Sessitsch A."/>
        </authorList>
    </citation>
    <scope>NUCLEOTIDE SEQUENCE [LARGE SCALE GENOMIC DNA]</scope>
    <source>
        <strain>DSM 17436 / LMG 22146 / PsJN</strain>
    </source>
</reference>
<comment type="function">
    <text evidence="1">Involved in the regulation of the intracellular balance of NAD and NADP, and is a key enzyme in the biosynthesis of NADP. Catalyzes specifically the phosphorylation on 2'-hydroxyl of the adenosine moiety of NAD to yield NADP.</text>
</comment>
<comment type="catalytic activity">
    <reaction evidence="1">
        <text>NAD(+) + ATP = ADP + NADP(+) + H(+)</text>
        <dbReference type="Rhea" id="RHEA:18629"/>
        <dbReference type="ChEBI" id="CHEBI:15378"/>
        <dbReference type="ChEBI" id="CHEBI:30616"/>
        <dbReference type="ChEBI" id="CHEBI:57540"/>
        <dbReference type="ChEBI" id="CHEBI:58349"/>
        <dbReference type="ChEBI" id="CHEBI:456216"/>
        <dbReference type="EC" id="2.7.1.23"/>
    </reaction>
</comment>
<comment type="cofactor">
    <cofactor evidence="1">
        <name>a divalent metal cation</name>
        <dbReference type="ChEBI" id="CHEBI:60240"/>
    </cofactor>
</comment>
<comment type="subcellular location">
    <subcellularLocation>
        <location evidence="1">Cytoplasm</location>
    </subcellularLocation>
</comment>
<comment type="similarity">
    <text evidence="1">Belongs to the NAD kinase family.</text>
</comment>
<keyword id="KW-0067">ATP-binding</keyword>
<keyword id="KW-0963">Cytoplasm</keyword>
<keyword id="KW-0418">Kinase</keyword>
<keyword id="KW-0520">NAD</keyword>
<keyword id="KW-0521">NADP</keyword>
<keyword id="KW-0547">Nucleotide-binding</keyword>
<keyword id="KW-0808">Transferase</keyword>
<evidence type="ECO:0000255" key="1">
    <source>
        <dbReference type="HAMAP-Rule" id="MF_00361"/>
    </source>
</evidence>
<protein>
    <recommendedName>
        <fullName evidence="1">NAD kinase</fullName>
        <ecNumber evidence="1">2.7.1.23</ecNumber>
    </recommendedName>
    <alternativeName>
        <fullName evidence="1">ATP-dependent NAD kinase</fullName>
    </alternativeName>
</protein>
<feature type="chain" id="PRO_1000120837" description="NAD kinase">
    <location>
        <begin position="1"/>
        <end position="300"/>
    </location>
</feature>
<feature type="active site" description="Proton acceptor" evidence="1">
    <location>
        <position position="75"/>
    </location>
</feature>
<feature type="binding site" evidence="1">
    <location>
        <begin position="75"/>
        <end position="76"/>
    </location>
    <ligand>
        <name>NAD(+)</name>
        <dbReference type="ChEBI" id="CHEBI:57540"/>
    </ligand>
</feature>
<feature type="binding site" evidence="1">
    <location>
        <begin position="149"/>
        <end position="150"/>
    </location>
    <ligand>
        <name>NAD(+)</name>
        <dbReference type="ChEBI" id="CHEBI:57540"/>
    </ligand>
</feature>
<feature type="binding site" evidence="1">
    <location>
        <position position="177"/>
    </location>
    <ligand>
        <name>NAD(+)</name>
        <dbReference type="ChEBI" id="CHEBI:57540"/>
    </ligand>
</feature>
<feature type="binding site" evidence="1">
    <location>
        <position position="179"/>
    </location>
    <ligand>
        <name>NAD(+)</name>
        <dbReference type="ChEBI" id="CHEBI:57540"/>
    </ligand>
</feature>
<feature type="binding site" evidence="1">
    <location>
        <begin position="190"/>
        <end position="195"/>
    </location>
    <ligand>
        <name>NAD(+)</name>
        <dbReference type="ChEBI" id="CHEBI:57540"/>
    </ligand>
</feature>
<feature type="binding site" evidence="1">
    <location>
        <position position="214"/>
    </location>
    <ligand>
        <name>NAD(+)</name>
        <dbReference type="ChEBI" id="CHEBI:57540"/>
    </ligand>
</feature>
<feature type="binding site" evidence="1">
    <location>
        <position position="248"/>
    </location>
    <ligand>
        <name>NAD(+)</name>
        <dbReference type="ChEBI" id="CHEBI:57540"/>
    </ligand>
</feature>
<proteinExistence type="inferred from homology"/>
<accession>B2SXB6</accession>
<name>NADK_PARPJ</name>
<gene>
    <name evidence="1" type="primary">nadK</name>
    <name type="ordered locus">Bphyt_0731</name>
</gene>
<sequence>MQVTSQFKTVALVGRNNTPGIAEPLTALASCIAKRGFEVVFEADTAAEIGVTDYPALRPAEIGARADVAVVLGGDGTMLGIGRQLAPYRTPLIGINHGRLGFITDIPISDMREIVPQMLSGNFEREERVLLEARIMRGGNPIYHALAFNDVVVNRSGFSGMAELHVSVDGRFMYNQRSDGLIVATPTGSTAYALSSQGPILHPQLQGIVLVPIAPHALSNRPIVLPDDSKVSIQIVSGREVNVNFDMQSFTSLELGDTIEVRRSRHTVPMLHPVGYSFFTTLRKKLHWNEYPSHEEDSKP</sequence>
<dbReference type="EC" id="2.7.1.23" evidence="1"/>
<dbReference type="EMBL" id="CP001052">
    <property type="protein sequence ID" value="ACD15155.1"/>
    <property type="molecule type" value="Genomic_DNA"/>
</dbReference>
<dbReference type="RefSeq" id="WP_012431791.1">
    <property type="nucleotide sequence ID" value="NC_010681.1"/>
</dbReference>
<dbReference type="SMR" id="B2SXB6"/>
<dbReference type="STRING" id="398527.Bphyt_0731"/>
<dbReference type="KEGG" id="bpy:Bphyt_0731"/>
<dbReference type="eggNOG" id="COG0061">
    <property type="taxonomic scope" value="Bacteria"/>
</dbReference>
<dbReference type="HOGENOM" id="CLU_008831_0_1_4"/>
<dbReference type="OrthoDB" id="9774737at2"/>
<dbReference type="Proteomes" id="UP000001739">
    <property type="component" value="Chromosome 1"/>
</dbReference>
<dbReference type="GO" id="GO:0005737">
    <property type="term" value="C:cytoplasm"/>
    <property type="evidence" value="ECO:0007669"/>
    <property type="project" value="UniProtKB-SubCell"/>
</dbReference>
<dbReference type="GO" id="GO:0005524">
    <property type="term" value="F:ATP binding"/>
    <property type="evidence" value="ECO:0007669"/>
    <property type="project" value="UniProtKB-KW"/>
</dbReference>
<dbReference type="GO" id="GO:0046872">
    <property type="term" value="F:metal ion binding"/>
    <property type="evidence" value="ECO:0007669"/>
    <property type="project" value="UniProtKB-UniRule"/>
</dbReference>
<dbReference type="GO" id="GO:0051287">
    <property type="term" value="F:NAD binding"/>
    <property type="evidence" value="ECO:0007669"/>
    <property type="project" value="UniProtKB-ARBA"/>
</dbReference>
<dbReference type="GO" id="GO:0003951">
    <property type="term" value="F:NAD+ kinase activity"/>
    <property type="evidence" value="ECO:0007669"/>
    <property type="project" value="UniProtKB-UniRule"/>
</dbReference>
<dbReference type="GO" id="GO:0019674">
    <property type="term" value="P:NAD metabolic process"/>
    <property type="evidence" value="ECO:0007669"/>
    <property type="project" value="InterPro"/>
</dbReference>
<dbReference type="GO" id="GO:0006741">
    <property type="term" value="P:NADP biosynthetic process"/>
    <property type="evidence" value="ECO:0007669"/>
    <property type="project" value="UniProtKB-UniRule"/>
</dbReference>
<dbReference type="Gene3D" id="3.40.50.10330">
    <property type="entry name" value="Probable inorganic polyphosphate/atp-NAD kinase, domain 1"/>
    <property type="match status" value="1"/>
</dbReference>
<dbReference type="Gene3D" id="2.60.200.30">
    <property type="entry name" value="Probable inorganic polyphosphate/atp-NAD kinase, domain 2"/>
    <property type="match status" value="1"/>
</dbReference>
<dbReference type="HAMAP" id="MF_00361">
    <property type="entry name" value="NAD_kinase"/>
    <property type="match status" value="1"/>
</dbReference>
<dbReference type="InterPro" id="IPR017438">
    <property type="entry name" value="ATP-NAD_kinase_N"/>
</dbReference>
<dbReference type="InterPro" id="IPR017437">
    <property type="entry name" value="ATP-NAD_kinase_PpnK-typ_C"/>
</dbReference>
<dbReference type="InterPro" id="IPR016064">
    <property type="entry name" value="NAD/diacylglycerol_kinase_sf"/>
</dbReference>
<dbReference type="InterPro" id="IPR002504">
    <property type="entry name" value="NADK"/>
</dbReference>
<dbReference type="NCBIfam" id="NF002561">
    <property type="entry name" value="PRK02155.1"/>
    <property type="match status" value="1"/>
</dbReference>
<dbReference type="PANTHER" id="PTHR20275">
    <property type="entry name" value="NAD KINASE"/>
    <property type="match status" value="1"/>
</dbReference>
<dbReference type="PANTHER" id="PTHR20275:SF0">
    <property type="entry name" value="NAD KINASE"/>
    <property type="match status" value="1"/>
</dbReference>
<dbReference type="Pfam" id="PF01513">
    <property type="entry name" value="NAD_kinase"/>
    <property type="match status" value="1"/>
</dbReference>
<dbReference type="Pfam" id="PF20143">
    <property type="entry name" value="NAD_kinase_C"/>
    <property type="match status" value="1"/>
</dbReference>
<dbReference type="SUPFAM" id="SSF111331">
    <property type="entry name" value="NAD kinase/diacylglycerol kinase-like"/>
    <property type="match status" value="1"/>
</dbReference>
<organism>
    <name type="scientific">Paraburkholderia phytofirmans (strain DSM 17436 / LMG 22146 / PsJN)</name>
    <name type="common">Burkholderia phytofirmans</name>
    <dbReference type="NCBI Taxonomy" id="398527"/>
    <lineage>
        <taxon>Bacteria</taxon>
        <taxon>Pseudomonadati</taxon>
        <taxon>Pseudomonadota</taxon>
        <taxon>Betaproteobacteria</taxon>
        <taxon>Burkholderiales</taxon>
        <taxon>Burkholderiaceae</taxon>
        <taxon>Paraburkholderia</taxon>
    </lineage>
</organism>